<sequence length="92" mass="10582">MSRSVWKGPFVDSYVLKKAEKSKESGRNEVIKIWSRRSTILPQFVGLTFGVYNGRKHIPVNVTEDMIGQKFGEYSPTRTYYGHAADKKAKRK</sequence>
<protein>
    <recommendedName>
        <fullName evidence="1">Small ribosomal subunit protein uS19</fullName>
    </recommendedName>
    <alternativeName>
        <fullName evidence="2">30S ribosomal protein S19</fullName>
    </alternativeName>
</protein>
<feature type="chain" id="PRO_0000265373" description="Small ribosomal subunit protein uS19">
    <location>
        <begin position="1"/>
        <end position="92"/>
    </location>
</feature>
<reference key="1">
    <citation type="submission" date="2006-02" db="EMBL/GenBank/DDBJ databases">
        <title>Complete sequence of chromosome of Jannaschia sp. CCS1.</title>
        <authorList>
            <consortium name="US DOE Joint Genome Institute"/>
            <person name="Copeland A."/>
            <person name="Lucas S."/>
            <person name="Lapidus A."/>
            <person name="Barry K."/>
            <person name="Detter J.C."/>
            <person name="Glavina del Rio T."/>
            <person name="Hammon N."/>
            <person name="Israni S."/>
            <person name="Pitluck S."/>
            <person name="Brettin T."/>
            <person name="Bruce D."/>
            <person name="Han C."/>
            <person name="Tapia R."/>
            <person name="Gilna P."/>
            <person name="Chertkov O."/>
            <person name="Saunders E."/>
            <person name="Schmutz J."/>
            <person name="Larimer F."/>
            <person name="Land M."/>
            <person name="Kyrpides N."/>
            <person name="Lykidis A."/>
            <person name="Moran M.A."/>
            <person name="Belas R."/>
            <person name="Ye W."/>
            <person name="Buchan A."/>
            <person name="Gonzalez J.M."/>
            <person name="Schell M.A."/>
            <person name="Richardson P."/>
        </authorList>
    </citation>
    <scope>NUCLEOTIDE SEQUENCE [LARGE SCALE GENOMIC DNA]</scope>
    <source>
        <strain>CCS1</strain>
    </source>
</reference>
<organism>
    <name type="scientific">Jannaschia sp. (strain CCS1)</name>
    <dbReference type="NCBI Taxonomy" id="290400"/>
    <lineage>
        <taxon>Bacteria</taxon>
        <taxon>Pseudomonadati</taxon>
        <taxon>Pseudomonadota</taxon>
        <taxon>Alphaproteobacteria</taxon>
        <taxon>Rhodobacterales</taxon>
        <taxon>Roseobacteraceae</taxon>
        <taxon>Jannaschia</taxon>
    </lineage>
</organism>
<keyword id="KW-1185">Reference proteome</keyword>
<keyword id="KW-0687">Ribonucleoprotein</keyword>
<keyword id="KW-0689">Ribosomal protein</keyword>
<keyword id="KW-0694">RNA-binding</keyword>
<keyword id="KW-0699">rRNA-binding</keyword>
<proteinExistence type="inferred from homology"/>
<gene>
    <name evidence="1" type="primary">rpsS</name>
    <name type="ordered locus">Jann_0589</name>
</gene>
<accession>Q28UV6</accession>
<dbReference type="EMBL" id="CP000264">
    <property type="protein sequence ID" value="ABD53506.1"/>
    <property type="molecule type" value="Genomic_DNA"/>
</dbReference>
<dbReference type="RefSeq" id="WP_011453714.1">
    <property type="nucleotide sequence ID" value="NC_007802.1"/>
</dbReference>
<dbReference type="SMR" id="Q28UV6"/>
<dbReference type="STRING" id="290400.Jann_0589"/>
<dbReference type="KEGG" id="jan:Jann_0589"/>
<dbReference type="eggNOG" id="COG0185">
    <property type="taxonomic scope" value="Bacteria"/>
</dbReference>
<dbReference type="HOGENOM" id="CLU_144911_0_1_5"/>
<dbReference type="OrthoDB" id="9797833at2"/>
<dbReference type="Proteomes" id="UP000008326">
    <property type="component" value="Chromosome"/>
</dbReference>
<dbReference type="GO" id="GO:0005737">
    <property type="term" value="C:cytoplasm"/>
    <property type="evidence" value="ECO:0007669"/>
    <property type="project" value="UniProtKB-ARBA"/>
</dbReference>
<dbReference type="GO" id="GO:0015935">
    <property type="term" value="C:small ribosomal subunit"/>
    <property type="evidence" value="ECO:0007669"/>
    <property type="project" value="InterPro"/>
</dbReference>
<dbReference type="GO" id="GO:0019843">
    <property type="term" value="F:rRNA binding"/>
    <property type="evidence" value="ECO:0007669"/>
    <property type="project" value="UniProtKB-UniRule"/>
</dbReference>
<dbReference type="GO" id="GO:0003735">
    <property type="term" value="F:structural constituent of ribosome"/>
    <property type="evidence" value="ECO:0007669"/>
    <property type="project" value="InterPro"/>
</dbReference>
<dbReference type="GO" id="GO:0000028">
    <property type="term" value="P:ribosomal small subunit assembly"/>
    <property type="evidence" value="ECO:0007669"/>
    <property type="project" value="TreeGrafter"/>
</dbReference>
<dbReference type="GO" id="GO:0006412">
    <property type="term" value="P:translation"/>
    <property type="evidence" value="ECO:0007669"/>
    <property type="project" value="UniProtKB-UniRule"/>
</dbReference>
<dbReference type="FunFam" id="3.30.860.10:FF:000001">
    <property type="entry name" value="30S ribosomal protein S19"/>
    <property type="match status" value="1"/>
</dbReference>
<dbReference type="Gene3D" id="3.30.860.10">
    <property type="entry name" value="30s Ribosomal Protein S19, Chain A"/>
    <property type="match status" value="1"/>
</dbReference>
<dbReference type="HAMAP" id="MF_00531">
    <property type="entry name" value="Ribosomal_uS19"/>
    <property type="match status" value="1"/>
</dbReference>
<dbReference type="InterPro" id="IPR002222">
    <property type="entry name" value="Ribosomal_uS19"/>
</dbReference>
<dbReference type="InterPro" id="IPR005732">
    <property type="entry name" value="Ribosomal_uS19_bac-type"/>
</dbReference>
<dbReference type="InterPro" id="IPR020934">
    <property type="entry name" value="Ribosomal_uS19_CS"/>
</dbReference>
<dbReference type="InterPro" id="IPR023575">
    <property type="entry name" value="Ribosomal_uS19_SF"/>
</dbReference>
<dbReference type="NCBIfam" id="TIGR01050">
    <property type="entry name" value="rpsS_bact"/>
    <property type="match status" value="1"/>
</dbReference>
<dbReference type="PANTHER" id="PTHR11880">
    <property type="entry name" value="RIBOSOMAL PROTEIN S19P FAMILY MEMBER"/>
    <property type="match status" value="1"/>
</dbReference>
<dbReference type="PANTHER" id="PTHR11880:SF8">
    <property type="entry name" value="SMALL RIBOSOMAL SUBUNIT PROTEIN US19M"/>
    <property type="match status" value="1"/>
</dbReference>
<dbReference type="Pfam" id="PF00203">
    <property type="entry name" value="Ribosomal_S19"/>
    <property type="match status" value="1"/>
</dbReference>
<dbReference type="PIRSF" id="PIRSF002144">
    <property type="entry name" value="Ribosomal_S19"/>
    <property type="match status" value="1"/>
</dbReference>
<dbReference type="PRINTS" id="PR00975">
    <property type="entry name" value="RIBOSOMALS19"/>
</dbReference>
<dbReference type="SUPFAM" id="SSF54570">
    <property type="entry name" value="Ribosomal protein S19"/>
    <property type="match status" value="1"/>
</dbReference>
<dbReference type="PROSITE" id="PS00323">
    <property type="entry name" value="RIBOSOMAL_S19"/>
    <property type="match status" value="1"/>
</dbReference>
<comment type="function">
    <text evidence="1">Protein S19 forms a complex with S13 that binds strongly to the 16S ribosomal RNA.</text>
</comment>
<comment type="similarity">
    <text evidence="1">Belongs to the universal ribosomal protein uS19 family.</text>
</comment>
<name>RS19_JANSC</name>
<evidence type="ECO:0000255" key="1">
    <source>
        <dbReference type="HAMAP-Rule" id="MF_00531"/>
    </source>
</evidence>
<evidence type="ECO:0000305" key="2"/>